<gene>
    <name type="primary">SWC5</name>
    <name type="synonym">AOR1</name>
    <name type="ordered locus">YBR231C</name>
    <name type="ORF">YBR1529</name>
</gene>
<accession>P38326</accession>
<accession>D6VQM7</accession>
<keyword id="KW-0002">3D-structure</keyword>
<keyword id="KW-0010">Activator</keyword>
<keyword id="KW-0156">Chromatin regulator</keyword>
<keyword id="KW-0539">Nucleus</keyword>
<keyword id="KW-0597">Phosphoprotein</keyword>
<keyword id="KW-1185">Reference proteome</keyword>
<keyword id="KW-0804">Transcription</keyword>
<keyword id="KW-0805">Transcription regulation</keyword>
<comment type="function">
    <text evidence="5 6 7">Component of the SWR1 complex which mediates the ATP-dependent exchange of histone H2A for the H2A variant HZT1 leading to transcriptional regulation of selected genes by chromatin remodeling. Involved in chromosome stability.</text>
</comment>
<comment type="subunit">
    <text evidence="5 6 7">Component of the SWR1 chromatin remodeling complex composed of at least ACT1, ARP4, RVB1, RVB2, ARP6, YAF9, VPS71, VPS72, SWC3, SWC4, SWC5, SWC7 and SWR1, and perhaps BDF1.</text>
</comment>
<comment type="subcellular location">
    <subcellularLocation>
        <location evidence="3">Nucleus</location>
    </subcellularLocation>
</comment>
<comment type="miscellaneous">
    <text evidence="4">Present with 1680 molecules/cell in log phase SD medium.</text>
</comment>
<comment type="similarity">
    <text evidence="8">Belongs to the SWC5 family.</text>
</comment>
<dbReference type="EMBL" id="Z36100">
    <property type="protein sequence ID" value="CAA85194.1"/>
    <property type="molecule type" value="Genomic_DNA"/>
</dbReference>
<dbReference type="EMBL" id="BK006936">
    <property type="protein sequence ID" value="DAA07347.1"/>
    <property type="molecule type" value="Genomic_DNA"/>
</dbReference>
<dbReference type="PIR" id="S46107">
    <property type="entry name" value="S46107"/>
</dbReference>
<dbReference type="RefSeq" id="NP_009790.3">
    <property type="nucleotide sequence ID" value="NM_001178579.3"/>
</dbReference>
<dbReference type="PDB" id="6KBB">
    <property type="method" value="X-ray"/>
    <property type="resolution" value="2.37 A"/>
    <property type="chains" value="E/F=1-79"/>
</dbReference>
<dbReference type="PDB" id="8QYV">
    <property type="method" value="EM"/>
    <property type="resolution" value="3.50 A"/>
    <property type="chains" value="P=1-303"/>
</dbReference>
<dbReference type="PDB" id="8QZ0">
    <property type="method" value="EM"/>
    <property type="resolution" value="3.80 A"/>
    <property type="chains" value="P=1-303"/>
</dbReference>
<dbReference type="PDBsum" id="6KBB"/>
<dbReference type="PDBsum" id="8QYV"/>
<dbReference type="PDBsum" id="8QZ0"/>
<dbReference type="EMDB" id="EMD-18764"/>
<dbReference type="EMDB" id="EMD-18769"/>
<dbReference type="EMDB" id="EMD-41839"/>
<dbReference type="EMDB" id="EMD-41851"/>
<dbReference type="EMDB" id="EMD-41852"/>
<dbReference type="EMDB" id="EMD-41853"/>
<dbReference type="SMR" id="P38326"/>
<dbReference type="BioGRID" id="32926">
    <property type="interactions" value="912"/>
</dbReference>
<dbReference type="ComplexPortal" id="CPX-2122">
    <property type="entry name" value="Swr1 chromatin remodelling complex"/>
</dbReference>
<dbReference type="DIP" id="DIP-4260N"/>
<dbReference type="FunCoup" id="P38326">
    <property type="interactions" value="546"/>
</dbReference>
<dbReference type="IntAct" id="P38326">
    <property type="interactions" value="18"/>
</dbReference>
<dbReference type="MINT" id="P38326"/>
<dbReference type="STRING" id="4932.YBR231C"/>
<dbReference type="iPTMnet" id="P38326"/>
<dbReference type="PaxDb" id="4932-YBR231C"/>
<dbReference type="PeptideAtlas" id="P38326"/>
<dbReference type="EnsemblFungi" id="YBR231C_mRNA">
    <property type="protein sequence ID" value="YBR231C"/>
    <property type="gene ID" value="YBR231C"/>
</dbReference>
<dbReference type="GeneID" id="852532"/>
<dbReference type="KEGG" id="sce:YBR231C"/>
<dbReference type="AGR" id="SGD:S000000435"/>
<dbReference type="SGD" id="S000000435">
    <property type="gene designation" value="SWC5"/>
</dbReference>
<dbReference type="VEuPathDB" id="FungiDB:YBR231C"/>
<dbReference type="eggNOG" id="KOG4776">
    <property type="taxonomic scope" value="Eukaryota"/>
</dbReference>
<dbReference type="HOGENOM" id="CLU_062474_1_0_1"/>
<dbReference type="InParanoid" id="P38326"/>
<dbReference type="OMA" id="LDWAAYV"/>
<dbReference type="OrthoDB" id="445677at2759"/>
<dbReference type="BioCyc" id="YEAST:G3O-29163-MONOMER"/>
<dbReference type="BioGRID-ORCS" id="852532">
    <property type="hits" value="9 hits in 10 CRISPR screens"/>
</dbReference>
<dbReference type="PRO" id="PR:P38326"/>
<dbReference type="Proteomes" id="UP000002311">
    <property type="component" value="Chromosome II"/>
</dbReference>
<dbReference type="RNAct" id="P38326">
    <property type="molecule type" value="protein"/>
</dbReference>
<dbReference type="GO" id="GO:0000785">
    <property type="term" value="C:chromatin"/>
    <property type="evidence" value="ECO:0000314"/>
    <property type="project" value="ComplexPortal"/>
</dbReference>
<dbReference type="GO" id="GO:0005829">
    <property type="term" value="C:cytosol"/>
    <property type="evidence" value="ECO:0000314"/>
    <property type="project" value="SGD"/>
</dbReference>
<dbReference type="GO" id="GO:0005634">
    <property type="term" value="C:nucleus"/>
    <property type="evidence" value="ECO:0000314"/>
    <property type="project" value="SGD"/>
</dbReference>
<dbReference type="GO" id="GO:0000812">
    <property type="term" value="C:Swr1 complex"/>
    <property type="evidence" value="ECO:0000314"/>
    <property type="project" value="SGD"/>
</dbReference>
<dbReference type="GO" id="GO:0006338">
    <property type="term" value="P:chromatin remodeling"/>
    <property type="evidence" value="ECO:0000314"/>
    <property type="project" value="SGD"/>
</dbReference>
<dbReference type="GO" id="GO:0006355">
    <property type="term" value="P:regulation of DNA-templated transcription"/>
    <property type="evidence" value="ECO:0000303"/>
    <property type="project" value="ComplexPortal"/>
</dbReference>
<dbReference type="CDD" id="cd22868">
    <property type="entry name" value="Swc5_NTD"/>
    <property type="match status" value="1"/>
</dbReference>
<dbReference type="InterPro" id="IPR011421">
    <property type="entry name" value="BCNT-C"/>
</dbReference>
<dbReference type="InterPro" id="IPR027124">
    <property type="entry name" value="Swc5/CFDP1/2"/>
</dbReference>
<dbReference type="PANTHER" id="PTHR48407">
    <property type="entry name" value="CRANIOFACIAL DEVELOPMENT PROTEIN 1"/>
    <property type="match status" value="1"/>
</dbReference>
<dbReference type="PANTHER" id="PTHR48407:SF1">
    <property type="entry name" value="CRANIOFACIAL DEVELOPMENT PROTEIN 1"/>
    <property type="match status" value="1"/>
</dbReference>
<dbReference type="Pfam" id="PF07572">
    <property type="entry name" value="BCNT"/>
    <property type="match status" value="1"/>
</dbReference>
<dbReference type="PROSITE" id="PS51279">
    <property type="entry name" value="BCNT_C"/>
    <property type="match status" value="1"/>
</dbReference>
<proteinExistence type="evidence at protein level"/>
<feature type="chain" id="PRO_0000212513" description="SWR1-complex protein 5">
    <location>
        <begin position="1"/>
        <end position="303"/>
    </location>
</feature>
<feature type="domain" description="BCNT-C" evidence="1">
    <location>
        <begin position="217"/>
        <end position="294"/>
    </location>
</feature>
<feature type="region of interest" description="Disordered" evidence="2">
    <location>
        <begin position="1"/>
        <end position="92"/>
    </location>
</feature>
<feature type="region of interest" description="Disordered" evidence="2">
    <location>
        <begin position="126"/>
        <end position="146"/>
    </location>
</feature>
<feature type="region of interest" description="Disordered" evidence="2">
    <location>
        <begin position="199"/>
        <end position="219"/>
    </location>
</feature>
<feature type="compositionally biased region" description="Basic and acidic residues" evidence="2">
    <location>
        <begin position="1"/>
        <end position="12"/>
    </location>
</feature>
<feature type="compositionally biased region" description="Acidic residues" evidence="2">
    <location>
        <begin position="13"/>
        <end position="29"/>
    </location>
</feature>
<feature type="compositionally biased region" description="Acidic residues" evidence="2">
    <location>
        <begin position="41"/>
        <end position="54"/>
    </location>
</feature>
<feature type="compositionally biased region" description="Basic and acidic residues" evidence="2">
    <location>
        <begin position="55"/>
        <end position="72"/>
    </location>
</feature>
<feature type="compositionally biased region" description="Low complexity" evidence="2">
    <location>
        <begin position="126"/>
        <end position="135"/>
    </location>
</feature>
<feature type="compositionally biased region" description="Basic and acidic residues" evidence="2">
    <location>
        <begin position="200"/>
        <end position="211"/>
    </location>
</feature>
<feature type="modified residue" description="Phosphoserine" evidence="9">
    <location>
        <position position="209"/>
    </location>
</feature>
<feature type="helix" evidence="10">
    <location>
        <begin position="16"/>
        <end position="19"/>
    </location>
</feature>
<feature type="helix" evidence="10">
    <location>
        <begin position="23"/>
        <end position="25"/>
    </location>
</feature>
<name>SWC5_YEAST</name>
<sequence>MPEVETKIIPNEKEDEDEDGYIEEEDEDFQPEKDKLGGGSDDSDASDGGDDYDDGVNRDKGRNKVDYSRIESESGGLIKTRRARQAEEEYAKTHKYESLTVESIPAKVNSIWEELQEASKNRLLSSSGKVGSVLDGSKEARSTTAAQQEDKILIERNYKFAGETVHEKKWVSRSSAEGQEYLNSLKFKQQAPAAPVQLEKAVRTKSNESRQHLRRPLKRPPLLEQIISGGLRPKLTTLEKSQLDWASYVDRAGLNDELVLHNKDGFLARQEFLQRVGSAEDERYKELRRQQLAQQLQQDSEAS</sequence>
<evidence type="ECO:0000255" key="1">
    <source>
        <dbReference type="PROSITE-ProRule" id="PRU00610"/>
    </source>
</evidence>
<evidence type="ECO:0000256" key="2">
    <source>
        <dbReference type="SAM" id="MobiDB-lite"/>
    </source>
</evidence>
<evidence type="ECO:0000269" key="3">
    <source>
    </source>
</evidence>
<evidence type="ECO:0000269" key="4">
    <source>
    </source>
</evidence>
<evidence type="ECO:0000269" key="5">
    <source>
    </source>
</evidence>
<evidence type="ECO:0000269" key="6">
    <source>
    </source>
</evidence>
<evidence type="ECO:0000269" key="7">
    <source>
    </source>
</evidence>
<evidence type="ECO:0000305" key="8"/>
<evidence type="ECO:0007744" key="9">
    <source>
    </source>
</evidence>
<evidence type="ECO:0007829" key="10">
    <source>
        <dbReference type="PDB" id="6KBB"/>
    </source>
</evidence>
<reference key="1">
    <citation type="journal article" date="1994" name="EMBO J.">
        <title>Complete DNA sequence of yeast chromosome II.</title>
        <authorList>
            <person name="Feldmann H."/>
            <person name="Aigle M."/>
            <person name="Aljinovic G."/>
            <person name="Andre B."/>
            <person name="Baclet M.C."/>
            <person name="Barthe C."/>
            <person name="Baur A."/>
            <person name="Becam A.-M."/>
            <person name="Biteau N."/>
            <person name="Boles E."/>
            <person name="Brandt T."/>
            <person name="Brendel M."/>
            <person name="Brueckner M."/>
            <person name="Bussereau F."/>
            <person name="Christiansen C."/>
            <person name="Contreras R."/>
            <person name="Crouzet M."/>
            <person name="Cziepluch C."/>
            <person name="Demolis N."/>
            <person name="Delaveau T."/>
            <person name="Doignon F."/>
            <person name="Domdey H."/>
            <person name="Duesterhus S."/>
            <person name="Dubois E."/>
            <person name="Dujon B."/>
            <person name="El Bakkoury M."/>
            <person name="Entian K.-D."/>
            <person name="Feuermann M."/>
            <person name="Fiers W."/>
            <person name="Fobo G.M."/>
            <person name="Fritz C."/>
            <person name="Gassenhuber J."/>
            <person name="Glansdorff N."/>
            <person name="Goffeau A."/>
            <person name="Grivell L.A."/>
            <person name="de Haan M."/>
            <person name="Hein C."/>
            <person name="Herbert C.J."/>
            <person name="Hollenberg C.P."/>
            <person name="Holmstroem K."/>
            <person name="Jacq C."/>
            <person name="Jacquet M."/>
            <person name="Jauniaux J.-C."/>
            <person name="Jonniaux J.-L."/>
            <person name="Kallesoee T."/>
            <person name="Kiesau P."/>
            <person name="Kirchrath L."/>
            <person name="Koetter P."/>
            <person name="Korol S."/>
            <person name="Liebl S."/>
            <person name="Logghe M."/>
            <person name="Lohan A.J.E."/>
            <person name="Louis E.J."/>
            <person name="Li Z.Y."/>
            <person name="Maat M.J."/>
            <person name="Mallet L."/>
            <person name="Mannhaupt G."/>
            <person name="Messenguy F."/>
            <person name="Miosga T."/>
            <person name="Molemans F."/>
            <person name="Mueller S."/>
            <person name="Nasr F."/>
            <person name="Obermaier B."/>
            <person name="Perea J."/>
            <person name="Pierard A."/>
            <person name="Piravandi E."/>
            <person name="Pohl F.M."/>
            <person name="Pohl T.M."/>
            <person name="Potier S."/>
            <person name="Proft M."/>
            <person name="Purnelle B."/>
            <person name="Ramezani Rad M."/>
            <person name="Rieger M."/>
            <person name="Rose M."/>
            <person name="Schaaff-Gerstenschlaeger I."/>
            <person name="Scherens B."/>
            <person name="Schwarzlose C."/>
            <person name="Skala J."/>
            <person name="Slonimski P.P."/>
            <person name="Smits P.H.M."/>
            <person name="Souciet J.-L."/>
            <person name="Steensma H.Y."/>
            <person name="Stucka R."/>
            <person name="Urrestarazu L.A."/>
            <person name="van der Aart Q.J.M."/>
            <person name="Van Dyck L."/>
            <person name="Vassarotti A."/>
            <person name="Vetter I."/>
            <person name="Vierendeels F."/>
            <person name="Vissers S."/>
            <person name="Wagner G."/>
            <person name="de Wergifosse P."/>
            <person name="Wolfe K.H."/>
            <person name="Zagulski M."/>
            <person name="Zimmermann F.K."/>
            <person name="Mewes H.-W."/>
            <person name="Kleine K."/>
        </authorList>
    </citation>
    <scope>NUCLEOTIDE SEQUENCE [LARGE SCALE GENOMIC DNA]</scope>
    <source>
        <strain>ATCC 204508 / S288c</strain>
    </source>
</reference>
<reference key="2">
    <citation type="journal article" date="2014" name="G3 (Bethesda)">
        <title>The reference genome sequence of Saccharomyces cerevisiae: Then and now.</title>
        <authorList>
            <person name="Engel S.R."/>
            <person name="Dietrich F.S."/>
            <person name="Fisk D.G."/>
            <person name="Binkley G."/>
            <person name="Balakrishnan R."/>
            <person name="Costanzo M.C."/>
            <person name="Dwight S.S."/>
            <person name="Hitz B.C."/>
            <person name="Karra K."/>
            <person name="Nash R.S."/>
            <person name="Weng S."/>
            <person name="Wong E.D."/>
            <person name="Lloyd P."/>
            <person name="Skrzypek M.S."/>
            <person name="Miyasato S.R."/>
            <person name="Simison M."/>
            <person name="Cherry J.M."/>
        </authorList>
    </citation>
    <scope>GENOME REANNOTATION</scope>
    <source>
        <strain>ATCC 204508 / S288c</strain>
    </source>
</reference>
<reference key="3">
    <citation type="journal article" date="2003" name="Mol. Cell">
        <title>A Snf2 family ATPase complex required for recruitment of the histone H2A variant Htz1.</title>
        <authorList>
            <person name="Krogan N.J."/>
            <person name="Keogh M.-C."/>
            <person name="Datta N."/>
            <person name="Sawa C."/>
            <person name="Ryan O.W."/>
            <person name="Ding H."/>
            <person name="Haw R.A."/>
            <person name="Pootoolal J."/>
            <person name="Tong A."/>
            <person name="Canadien V."/>
            <person name="Richards D.P."/>
            <person name="Wu X."/>
            <person name="Emili A."/>
            <person name="Hughes T.R."/>
            <person name="Buratowski S."/>
            <person name="Greenblatt J.F."/>
        </authorList>
    </citation>
    <scope>IDENTIFICATION IN THE SWR1 COMPLEX</scope>
    <scope>FUNCTION OF THE SWR1 COMPLEX</scope>
    <scope>IDENTIFICATION BY MASS SPECTROMETRY</scope>
</reference>
<reference key="4">
    <citation type="journal article" date="2003" name="Nature">
        <title>Global analysis of protein localization in budding yeast.</title>
        <authorList>
            <person name="Huh W.-K."/>
            <person name="Falvo J.V."/>
            <person name="Gerke L.C."/>
            <person name="Carroll A.S."/>
            <person name="Howson R.W."/>
            <person name="Weissman J.S."/>
            <person name="O'Shea E.K."/>
        </authorList>
    </citation>
    <scope>SUBCELLULAR LOCATION [LARGE SCALE ANALYSIS]</scope>
</reference>
<reference key="5">
    <citation type="journal article" date="2003" name="Nature">
        <title>Global analysis of protein expression in yeast.</title>
        <authorList>
            <person name="Ghaemmaghami S."/>
            <person name="Huh W.-K."/>
            <person name="Bower K."/>
            <person name="Howson R.W."/>
            <person name="Belle A."/>
            <person name="Dephoure N."/>
            <person name="O'Shea E.K."/>
            <person name="Weissman J.S."/>
        </authorList>
    </citation>
    <scope>LEVEL OF PROTEIN EXPRESSION [LARGE SCALE ANALYSIS]</scope>
</reference>
<reference key="6">
    <citation type="journal article" date="2004" name="PLoS Biol.">
        <title>A protein complex containing the conserved Swi2/Snf2-related ATPase Swr1p deposits histone variant H2A.Z into euchromatin.</title>
        <authorList>
            <person name="Kobor M.S."/>
            <person name="Venkatasubrahmanyam S."/>
            <person name="Meneghini M.D."/>
            <person name="Gin J.W."/>
            <person name="Jennings J.L."/>
            <person name="Link A.J."/>
            <person name="Madhani H.D."/>
            <person name="Rine J."/>
        </authorList>
    </citation>
    <scope>IDENTIFICATION IN THE SWR1 COMPLEX</scope>
    <scope>FUNCTION OF THE SWR1 COMPLEX</scope>
    <scope>IDENTIFICATION BY MASS SPECTROMETRY</scope>
</reference>
<reference key="7">
    <citation type="journal article" date="2004" name="Science">
        <title>ATP-driven exchange of histone H2AZ variant catalyzed by SWR1 chromatin remodeling complex.</title>
        <authorList>
            <person name="Mizuguchi G."/>
            <person name="Shen X."/>
            <person name="Landry J."/>
            <person name="Wu W.-H."/>
            <person name="Sen S."/>
            <person name="Wu C."/>
        </authorList>
    </citation>
    <scope>IDENTIFICATION IN THE SWR1 COMPLEX</scope>
    <scope>FUNCTION OF THE SWR1 COMPLEX</scope>
    <scope>IDENTIFICATION BY MASS SPECTROMETRY</scope>
</reference>
<reference key="8">
    <citation type="journal article" date="2007" name="Proc. Natl. Acad. Sci. U.S.A.">
        <title>Analysis of phosphorylation sites on proteins from Saccharomyces cerevisiae by electron transfer dissociation (ETD) mass spectrometry.</title>
        <authorList>
            <person name="Chi A."/>
            <person name="Huttenhower C."/>
            <person name="Geer L.Y."/>
            <person name="Coon J.J."/>
            <person name="Syka J.E.P."/>
            <person name="Bai D.L."/>
            <person name="Shabanowitz J."/>
            <person name="Burke D.J."/>
            <person name="Troyanskaya O.G."/>
            <person name="Hunt D.F."/>
        </authorList>
    </citation>
    <scope>PHOSPHORYLATION [LARGE SCALE ANALYSIS] AT SER-209</scope>
    <scope>IDENTIFICATION BY MASS SPECTROMETRY [LARGE SCALE ANALYSIS]</scope>
</reference>
<organism>
    <name type="scientific">Saccharomyces cerevisiae (strain ATCC 204508 / S288c)</name>
    <name type="common">Baker's yeast</name>
    <dbReference type="NCBI Taxonomy" id="559292"/>
    <lineage>
        <taxon>Eukaryota</taxon>
        <taxon>Fungi</taxon>
        <taxon>Dikarya</taxon>
        <taxon>Ascomycota</taxon>
        <taxon>Saccharomycotina</taxon>
        <taxon>Saccharomycetes</taxon>
        <taxon>Saccharomycetales</taxon>
        <taxon>Saccharomycetaceae</taxon>
        <taxon>Saccharomyces</taxon>
    </lineage>
</organism>
<protein>
    <recommendedName>
        <fullName>SWR1-complex protein 5</fullName>
    </recommendedName>
</protein>